<gene>
    <name evidence="1" type="primary">proA</name>
    <name type="ordered locus">Ppha_1100</name>
</gene>
<keyword id="KW-0028">Amino-acid biosynthesis</keyword>
<keyword id="KW-0963">Cytoplasm</keyword>
<keyword id="KW-0521">NADP</keyword>
<keyword id="KW-0560">Oxidoreductase</keyword>
<keyword id="KW-0641">Proline biosynthesis</keyword>
<keyword id="KW-1185">Reference proteome</keyword>
<evidence type="ECO:0000255" key="1">
    <source>
        <dbReference type="HAMAP-Rule" id="MF_00412"/>
    </source>
</evidence>
<reference key="1">
    <citation type="submission" date="2008-06" db="EMBL/GenBank/DDBJ databases">
        <title>Complete sequence of Pelodictyon phaeoclathratiforme BU-1.</title>
        <authorList>
            <consortium name="US DOE Joint Genome Institute"/>
            <person name="Lucas S."/>
            <person name="Copeland A."/>
            <person name="Lapidus A."/>
            <person name="Glavina del Rio T."/>
            <person name="Dalin E."/>
            <person name="Tice H."/>
            <person name="Bruce D."/>
            <person name="Goodwin L."/>
            <person name="Pitluck S."/>
            <person name="Schmutz J."/>
            <person name="Larimer F."/>
            <person name="Land M."/>
            <person name="Hauser L."/>
            <person name="Kyrpides N."/>
            <person name="Mikhailova N."/>
            <person name="Liu Z."/>
            <person name="Li T."/>
            <person name="Zhao F."/>
            <person name="Overmann J."/>
            <person name="Bryant D.A."/>
            <person name="Richardson P."/>
        </authorList>
    </citation>
    <scope>NUCLEOTIDE SEQUENCE [LARGE SCALE GENOMIC DNA]</scope>
    <source>
        <strain>DSM 5477 / BU-1</strain>
    </source>
</reference>
<name>PROA_PELPB</name>
<accession>B4SG68</accession>
<comment type="function">
    <text evidence="1">Catalyzes the NADPH-dependent reduction of L-glutamate 5-phosphate into L-glutamate 5-semialdehyde and phosphate. The product spontaneously undergoes cyclization to form 1-pyrroline-5-carboxylate.</text>
</comment>
<comment type="catalytic activity">
    <reaction evidence="1">
        <text>L-glutamate 5-semialdehyde + phosphate + NADP(+) = L-glutamyl 5-phosphate + NADPH + H(+)</text>
        <dbReference type="Rhea" id="RHEA:19541"/>
        <dbReference type="ChEBI" id="CHEBI:15378"/>
        <dbReference type="ChEBI" id="CHEBI:43474"/>
        <dbReference type="ChEBI" id="CHEBI:57783"/>
        <dbReference type="ChEBI" id="CHEBI:58066"/>
        <dbReference type="ChEBI" id="CHEBI:58274"/>
        <dbReference type="ChEBI" id="CHEBI:58349"/>
        <dbReference type="EC" id="1.2.1.41"/>
    </reaction>
</comment>
<comment type="pathway">
    <text evidence="1">Amino-acid biosynthesis; L-proline biosynthesis; L-glutamate 5-semialdehyde from L-glutamate: step 2/2.</text>
</comment>
<comment type="subcellular location">
    <subcellularLocation>
        <location evidence="1">Cytoplasm</location>
    </subcellularLocation>
</comment>
<comment type="similarity">
    <text evidence="1">Belongs to the gamma-glutamyl phosphate reductase family.</text>
</comment>
<dbReference type="EC" id="1.2.1.41" evidence="1"/>
<dbReference type="EMBL" id="CP001110">
    <property type="protein sequence ID" value="ACF43379.1"/>
    <property type="molecule type" value="Genomic_DNA"/>
</dbReference>
<dbReference type="RefSeq" id="WP_012507871.1">
    <property type="nucleotide sequence ID" value="NC_011060.1"/>
</dbReference>
<dbReference type="SMR" id="B4SG68"/>
<dbReference type="STRING" id="324925.Ppha_1100"/>
<dbReference type="KEGG" id="pph:Ppha_1100"/>
<dbReference type="eggNOG" id="COG0014">
    <property type="taxonomic scope" value="Bacteria"/>
</dbReference>
<dbReference type="HOGENOM" id="CLU_030231_0_0_10"/>
<dbReference type="OrthoDB" id="9809970at2"/>
<dbReference type="UniPathway" id="UPA00098">
    <property type="reaction ID" value="UER00360"/>
</dbReference>
<dbReference type="Proteomes" id="UP000002724">
    <property type="component" value="Chromosome"/>
</dbReference>
<dbReference type="GO" id="GO:0005737">
    <property type="term" value="C:cytoplasm"/>
    <property type="evidence" value="ECO:0007669"/>
    <property type="project" value="UniProtKB-SubCell"/>
</dbReference>
<dbReference type="GO" id="GO:0004350">
    <property type="term" value="F:glutamate-5-semialdehyde dehydrogenase activity"/>
    <property type="evidence" value="ECO:0007669"/>
    <property type="project" value="UniProtKB-UniRule"/>
</dbReference>
<dbReference type="GO" id="GO:0050661">
    <property type="term" value="F:NADP binding"/>
    <property type="evidence" value="ECO:0007669"/>
    <property type="project" value="InterPro"/>
</dbReference>
<dbReference type="GO" id="GO:0055129">
    <property type="term" value="P:L-proline biosynthetic process"/>
    <property type="evidence" value="ECO:0007669"/>
    <property type="project" value="UniProtKB-UniRule"/>
</dbReference>
<dbReference type="CDD" id="cd07079">
    <property type="entry name" value="ALDH_F18-19_ProA-GPR"/>
    <property type="match status" value="1"/>
</dbReference>
<dbReference type="Gene3D" id="3.40.605.10">
    <property type="entry name" value="Aldehyde Dehydrogenase, Chain A, domain 1"/>
    <property type="match status" value="1"/>
</dbReference>
<dbReference type="Gene3D" id="3.40.309.10">
    <property type="entry name" value="Aldehyde Dehydrogenase, Chain A, domain 2"/>
    <property type="match status" value="1"/>
</dbReference>
<dbReference type="HAMAP" id="MF_00412">
    <property type="entry name" value="ProA"/>
    <property type="match status" value="1"/>
</dbReference>
<dbReference type="InterPro" id="IPR016161">
    <property type="entry name" value="Ald_DH/histidinol_DH"/>
</dbReference>
<dbReference type="InterPro" id="IPR016163">
    <property type="entry name" value="Ald_DH_C"/>
</dbReference>
<dbReference type="InterPro" id="IPR016162">
    <property type="entry name" value="Ald_DH_N"/>
</dbReference>
<dbReference type="InterPro" id="IPR020593">
    <property type="entry name" value="G-glutamylP_reductase_CS"/>
</dbReference>
<dbReference type="InterPro" id="IPR012134">
    <property type="entry name" value="Glu-5-SA_DH"/>
</dbReference>
<dbReference type="InterPro" id="IPR000965">
    <property type="entry name" value="GPR_dom"/>
</dbReference>
<dbReference type="NCBIfam" id="NF001221">
    <property type="entry name" value="PRK00197.1"/>
    <property type="match status" value="1"/>
</dbReference>
<dbReference type="NCBIfam" id="TIGR00407">
    <property type="entry name" value="proA"/>
    <property type="match status" value="1"/>
</dbReference>
<dbReference type="PANTHER" id="PTHR11063:SF8">
    <property type="entry name" value="DELTA-1-PYRROLINE-5-CARBOXYLATE SYNTHASE"/>
    <property type="match status" value="1"/>
</dbReference>
<dbReference type="PANTHER" id="PTHR11063">
    <property type="entry name" value="GLUTAMATE SEMIALDEHYDE DEHYDROGENASE"/>
    <property type="match status" value="1"/>
</dbReference>
<dbReference type="PIRSF" id="PIRSF000151">
    <property type="entry name" value="GPR"/>
    <property type="match status" value="1"/>
</dbReference>
<dbReference type="SUPFAM" id="SSF53720">
    <property type="entry name" value="ALDH-like"/>
    <property type="match status" value="1"/>
</dbReference>
<dbReference type="PROSITE" id="PS01223">
    <property type="entry name" value="PROA"/>
    <property type="match status" value="1"/>
</dbReference>
<sequence length="418" mass="45607">MKETITKQLIAVQQASREIITLTDETINSLLCALADSIPSHQEAILQANQKDIERMDPADPMVDRLLLNASRLDAIAADIRNVASLPSPLDALLEERVLPNGLNLKKVTVPIGVIGIIYEARPNVTFDVFALCLKSGNATVLKGGSDAMYSNIAIVELIHSVLKQHGINPDTLYLLPAEREAAAVMLNAVGYIDMIIPRGSQKLIDFVRNNAKVPVIETGAGIVHTYFDKSGDLDLGKHIIFNAKTRRPSVCNALDTLVIHQERLADLPALVEPLQEKQVMLFADEAAFQALQGSYPDDLLHQAEPEHFGTEFLSLKMSVKTVSSLEEALEHITRYSSRHSEAIIATDPETTATFLKRVDAAVVYANTSTAFTDGAQFGLGAEIGISTQKLHARGPMALKELTTYKWIIEGNGQTRPA</sequence>
<protein>
    <recommendedName>
        <fullName evidence="1">Gamma-glutamyl phosphate reductase</fullName>
        <shortName evidence="1">GPR</shortName>
        <ecNumber evidence="1">1.2.1.41</ecNumber>
    </recommendedName>
    <alternativeName>
        <fullName evidence="1">Glutamate-5-semialdehyde dehydrogenase</fullName>
    </alternativeName>
    <alternativeName>
        <fullName evidence="1">Glutamyl-gamma-semialdehyde dehydrogenase</fullName>
        <shortName evidence="1">GSA dehydrogenase</shortName>
    </alternativeName>
</protein>
<proteinExistence type="inferred from homology"/>
<organism>
    <name type="scientific">Pelodictyon phaeoclathratiforme (strain DSM 5477 / BU-1)</name>
    <dbReference type="NCBI Taxonomy" id="324925"/>
    <lineage>
        <taxon>Bacteria</taxon>
        <taxon>Pseudomonadati</taxon>
        <taxon>Chlorobiota</taxon>
        <taxon>Chlorobiia</taxon>
        <taxon>Chlorobiales</taxon>
        <taxon>Chlorobiaceae</taxon>
        <taxon>Chlorobium/Pelodictyon group</taxon>
        <taxon>Pelodictyon</taxon>
    </lineage>
</organism>
<feature type="chain" id="PRO_1000193634" description="Gamma-glutamyl phosphate reductase">
    <location>
        <begin position="1"/>
        <end position="418"/>
    </location>
</feature>